<dbReference type="EC" id="2.1.1.-"/>
<dbReference type="EMBL" id="CP000511">
    <property type="protein sequence ID" value="ABM12180.1"/>
    <property type="molecule type" value="Genomic_DNA"/>
</dbReference>
<dbReference type="RefSeq" id="WP_011778609.1">
    <property type="nucleotide sequence ID" value="NC_008726.1"/>
</dbReference>
<dbReference type="SMR" id="A1T4T0"/>
<dbReference type="STRING" id="350058.Mvan_1346"/>
<dbReference type="KEGG" id="mva:Mvan_1346"/>
<dbReference type="eggNOG" id="COG3315">
    <property type="taxonomic scope" value="Bacteria"/>
</dbReference>
<dbReference type="HOGENOM" id="CLU_056160_2_1_11"/>
<dbReference type="Proteomes" id="UP000009159">
    <property type="component" value="Chromosome"/>
</dbReference>
<dbReference type="GO" id="GO:0008168">
    <property type="term" value="F:methyltransferase activity"/>
    <property type="evidence" value="ECO:0007669"/>
    <property type="project" value="UniProtKB-KW"/>
</dbReference>
<dbReference type="GO" id="GO:0032259">
    <property type="term" value="P:methylation"/>
    <property type="evidence" value="ECO:0007669"/>
    <property type="project" value="UniProtKB-KW"/>
</dbReference>
<dbReference type="Gene3D" id="3.40.50.150">
    <property type="entry name" value="Vaccinia Virus protein VP39"/>
    <property type="match status" value="1"/>
</dbReference>
<dbReference type="InterPro" id="IPR007213">
    <property type="entry name" value="Ppm1/Ppm2/Tcmp"/>
</dbReference>
<dbReference type="InterPro" id="IPR029063">
    <property type="entry name" value="SAM-dependent_MTases_sf"/>
</dbReference>
<dbReference type="InterPro" id="IPR011610">
    <property type="entry name" value="SAM_mthyl_Trfase_ML2640-like"/>
</dbReference>
<dbReference type="NCBIfam" id="TIGR00027">
    <property type="entry name" value="mthyl_TIGR00027"/>
    <property type="match status" value="1"/>
</dbReference>
<dbReference type="PANTHER" id="PTHR43619">
    <property type="entry name" value="S-ADENOSYL-L-METHIONINE-DEPENDENT METHYLTRANSFERASE YKTD-RELATED"/>
    <property type="match status" value="1"/>
</dbReference>
<dbReference type="PANTHER" id="PTHR43619:SF2">
    <property type="entry name" value="S-ADENOSYL-L-METHIONINE-DEPENDENT METHYLTRANSFERASES SUPERFAMILY PROTEIN"/>
    <property type="match status" value="1"/>
</dbReference>
<dbReference type="Pfam" id="PF04072">
    <property type="entry name" value="LCM"/>
    <property type="match status" value="1"/>
</dbReference>
<dbReference type="SUPFAM" id="SSF53335">
    <property type="entry name" value="S-adenosyl-L-methionine-dependent methyltransferases"/>
    <property type="match status" value="1"/>
</dbReference>
<feature type="chain" id="PRO_0000361260" description="Putative S-adenosyl-L-methionine-dependent methyltransferase Mvan_1346">
    <location>
        <begin position="1"/>
        <end position="310"/>
    </location>
</feature>
<feature type="binding site" evidence="1">
    <location>
        <position position="136"/>
    </location>
    <ligand>
        <name>S-adenosyl-L-methionine</name>
        <dbReference type="ChEBI" id="CHEBI:59789"/>
    </ligand>
</feature>
<feature type="binding site" evidence="1">
    <location>
        <begin position="165"/>
        <end position="166"/>
    </location>
    <ligand>
        <name>S-adenosyl-L-methionine</name>
        <dbReference type="ChEBI" id="CHEBI:59789"/>
    </ligand>
</feature>
<gene>
    <name type="ordered locus">Mvan_1346</name>
</gene>
<accession>A1T4T0</accession>
<name>Y1346_MYCVP</name>
<proteinExistence type="inferred from homology"/>
<sequence length="310" mass="33727">MARTDNDTWDLASSVGATATMVAAARAVATRAPRPVIDDPFAAPLVQAVGVDFFTRLATGELTTEELDTNDAESPVGMSRFADAMAARTRFFDDFFAEAMRAGPPPIRQGVILASGLDARAYRLSWPQDMVLFEIDQPEVLTFKAATLADLGVRPSTKLATVAVDLRNDWPAALAEAGFDASAPTAWIAEGLLGYLPPDAQDRLLDTIGELSAPGSRLAVESVPTHHEADQEELREKMKESSDRWRSHGFDVDFSELVFLGERADVTDYLRDRGWTVDATPTNQLLTRYGLAPLDSDEGFAEVVYVSATR</sequence>
<reference key="1">
    <citation type="submission" date="2006-12" db="EMBL/GenBank/DDBJ databases">
        <title>Complete sequence of Mycobacterium vanbaalenii PYR-1.</title>
        <authorList>
            <consortium name="US DOE Joint Genome Institute"/>
            <person name="Copeland A."/>
            <person name="Lucas S."/>
            <person name="Lapidus A."/>
            <person name="Barry K."/>
            <person name="Detter J.C."/>
            <person name="Glavina del Rio T."/>
            <person name="Hammon N."/>
            <person name="Israni S."/>
            <person name="Dalin E."/>
            <person name="Tice H."/>
            <person name="Pitluck S."/>
            <person name="Singan V."/>
            <person name="Schmutz J."/>
            <person name="Larimer F."/>
            <person name="Land M."/>
            <person name="Hauser L."/>
            <person name="Kyrpides N."/>
            <person name="Anderson I.J."/>
            <person name="Miller C."/>
            <person name="Richardson P."/>
        </authorList>
    </citation>
    <scope>NUCLEOTIDE SEQUENCE [LARGE SCALE GENOMIC DNA]</scope>
    <source>
        <strain>DSM 7251 / JCM 13017 / BCRC 16820 / KCTC 9966 / NRRL B-24157 / PYR-1</strain>
    </source>
</reference>
<protein>
    <recommendedName>
        <fullName>Putative S-adenosyl-L-methionine-dependent methyltransferase Mvan_1346</fullName>
        <ecNumber>2.1.1.-</ecNumber>
    </recommendedName>
</protein>
<comment type="function">
    <text evidence="1">Exhibits S-adenosyl-L-methionine-dependent methyltransferase activity.</text>
</comment>
<comment type="similarity">
    <text evidence="2">Belongs to the UPF0677 family.</text>
</comment>
<organism>
    <name type="scientific">Mycolicibacterium vanbaalenii (strain DSM 7251 / JCM 13017 / BCRC 16820 / KCTC 9966 / NRRL B-24157 / PYR-1)</name>
    <name type="common">Mycobacterium vanbaalenii</name>
    <dbReference type="NCBI Taxonomy" id="350058"/>
    <lineage>
        <taxon>Bacteria</taxon>
        <taxon>Bacillati</taxon>
        <taxon>Actinomycetota</taxon>
        <taxon>Actinomycetes</taxon>
        <taxon>Mycobacteriales</taxon>
        <taxon>Mycobacteriaceae</taxon>
        <taxon>Mycolicibacterium</taxon>
    </lineage>
</organism>
<keyword id="KW-0489">Methyltransferase</keyword>
<keyword id="KW-0949">S-adenosyl-L-methionine</keyword>
<keyword id="KW-0808">Transferase</keyword>
<evidence type="ECO:0000250" key="1"/>
<evidence type="ECO:0000305" key="2"/>